<comment type="function">
    <text evidence="1">The glycine cleavage system catalyzes the degradation of glycine. The P protein binds the alpha-amino group of glycine through its pyridoxal phosphate cofactor; CO(2) is released and the remaining methylamine moiety is then transferred to the lipoamide cofactor of the H protein.</text>
</comment>
<comment type="catalytic activity">
    <reaction evidence="1">
        <text>N(6)-[(R)-lipoyl]-L-lysyl-[glycine-cleavage complex H protein] + glycine + H(+) = N(6)-[(R)-S(8)-aminomethyldihydrolipoyl]-L-lysyl-[glycine-cleavage complex H protein] + CO2</text>
        <dbReference type="Rhea" id="RHEA:24304"/>
        <dbReference type="Rhea" id="RHEA-COMP:10494"/>
        <dbReference type="Rhea" id="RHEA-COMP:10495"/>
        <dbReference type="ChEBI" id="CHEBI:15378"/>
        <dbReference type="ChEBI" id="CHEBI:16526"/>
        <dbReference type="ChEBI" id="CHEBI:57305"/>
        <dbReference type="ChEBI" id="CHEBI:83099"/>
        <dbReference type="ChEBI" id="CHEBI:83143"/>
        <dbReference type="EC" id="1.4.4.2"/>
    </reaction>
</comment>
<comment type="cofactor">
    <cofactor evidence="1">
        <name>pyridoxal 5'-phosphate</name>
        <dbReference type="ChEBI" id="CHEBI:597326"/>
    </cofactor>
</comment>
<comment type="subunit">
    <text evidence="1">The glycine cleavage system is composed of four proteins: P, T, L and H.</text>
</comment>
<comment type="similarity">
    <text evidence="1">Belongs to the GcvP family.</text>
</comment>
<accession>Q8FVU9</accession>
<accession>G0KD95</accession>
<name>GCSP_BRUSU</name>
<proteinExistence type="inferred from homology"/>
<dbReference type="EC" id="1.4.4.2" evidence="1"/>
<dbReference type="EMBL" id="AE014292">
    <property type="protein sequence ID" value="AAN33907.1"/>
    <property type="molecule type" value="Genomic_DNA"/>
</dbReference>
<dbReference type="EMBL" id="CP002998">
    <property type="protein sequence ID" value="AEM20183.1"/>
    <property type="molecule type" value="Genomic_DNA"/>
</dbReference>
<dbReference type="RefSeq" id="WP_004690267.1">
    <property type="nucleotide sequence ID" value="NZ_KN046805.1"/>
</dbReference>
<dbReference type="SMR" id="Q8FVU9"/>
<dbReference type="GeneID" id="45053745"/>
<dbReference type="KEGG" id="bms:BRA0725"/>
<dbReference type="KEGG" id="bsi:BS1330_II0718"/>
<dbReference type="PATRIC" id="fig|204722.21.peg.2344"/>
<dbReference type="HOGENOM" id="CLU_004620_2_3_5"/>
<dbReference type="PhylomeDB" id="Q8FVU9"/>
<dbReference type="PRO" id="PR:Q8FVU9"/>
<dbReference type="Proteomes" id="UP000007104">
    <property type="component" value="Chromosome II"/>
</dbReference>
<dbReference type="GO" id="GO:0005829">
    <property type="term" value="C:cytosol"/>
    <property type="evidence" value="ECO:0007669"/>
    <property type="project" value="TreeGrafter"/>
</dbReference>
<dbReference type="GO" id="GO:0005960">
    <property type="term" value="C:glycine cleavage complex"/>
    <property type="evidence" value="ECO:0007669"/>
    <property type="project" value="TreeGrafter"/>
</dbReference>
<dbReference type="GO" id="GO:0016594">
    <property type="term" value="F:glycine binding"/>
    <property type="evidence" value="ECO:0007669"/>
    <property type="project" value="TreeGrafter"/>
</dbReference>
<dbReference type="GO" id="GO:0004375">
    <property type="term" value="F:glycine dehydrogenase (decarboxylating) activity"/>
    <property type="evidence" value="ECO:0007669"/>
    <property type="project" value="UniProtKB-EC"/>
</dbReference>
<dbReference type="GO" id="GO:0030170">
    <property type="term" value="F:pyridoxal phosphate binding"/>
    <property type="evidence" value="ECO:0007669"/>
    <property type="project" value="TreeGrafter"/>
</dbReference>
<dbReference type="GO" id="GO:0019464">
    <property type="term" value="P:glycine decarboxylation via glycine cleavage system"/>
    <property type="evidence" value="ECO:0007669"/>
    <property type="project" value="UniProtKB-UniRule"/>
</dbReference>
<dbReference type="CDD" id="cd00613">
    <property type="entry name" value="GDC-P"/>
    <property type="match status" value="2"/>
</dbReference>
<dbReference type="FunFam" id="3.90.1150.10:FF:000007">
    <property type="entry name" value="Glycine dehydrogenase (decarboxylating), mitochondrial"/>
    <property type="match status" value="1"/>
</dbReference>
<dbReference type="FunFam" id="3.40.640.10:FF:000007">
    <property type="entry name" value="glycine dehydrogenase (Decarboxylating), mitochondrial"/>
    <property type="match status" value="1"/>
</dbReference>
<dbReference type="Gene3D" id="3.90.1150.10">
    <property type="entry name" value="Aspartate Aminotransferase, domain 1"/>
    <property type="match status" value="2"/>
</dbReference>
<dbReference type="Gene3D" id="3.40.640.10">
    <property type="entry name" value="Type I PLP-dependent aspartate aminotransferase-like (Major domain)"/>
    <property type="match status" value="2"/>
</dbReference>
<dbReference type="HAMAP" id="MF_00711">
    <property type="entry name" value="GcvP"/>
    <property type="match status" value="1"/>
</dbReference>
<dbReference type="InterPro" id="IPR003437">
    <property type="entry name" value="GcvP"/>
</dbReference>
<dbReference type="InterPro" id="IPR049316">
    <property type="entry name" value="GDC-P_C"/>
</dbReference>
<dbReference type="InterPro" id="IPR049315">
    <property type="entry name" value="GDC-P_N"/>
</dbReference>
<dbReference type="InterPro" id="IPR020581">
    <property type="entry name" value="GDC_P"/>
</dbReference>
<dbReference type="InterPro" id="IPR015424">
    <property type="entry name" value="PyrdxlP-dep_Trfase"/>
</dbReference>
<dbReference type="InterPro" id="IPR015421">
    <property type="entry name" value="PyrdxlP-dep_Trfase_major"/>
</dbReference>
<dbReference type="InterPro" id="IPR015422">
    <property type="entry name" value="PyrdxlP-dep_Trfase_small"/>
</dbReference>
<dbReference type="NCBIfam" id="TIGR00461">
    <property type="entry name" value="gcvP"/>
    <property type="match status" value="1"/>
</dbReference>
<dbReference type="NCBIfam" id="NF003346">
    <property type="entry name" value="PRK04366.1"/>
    <property type="match status" value="1"/>
</dbReference>
<dbReference type="PANTHER" id="PTHR11773:SF1">
    <property type="entry name" value="GLYCINE DEHYDROGENASE (DECARBOXYLATING), MITOCHONDRIAL"/>
    <property type="match status" value="1"/>
</dbReference>
<dbReference type="PANTHER" id="PTHR11773">
    <property type="entry name" value="GLYCINE DEHYDROGENASE, DECARBOXYLATING"/>
    <property type="match status" value="1"/>
</dbReference>
<dbReference type="Pfam" id="PF21478">
    <property type="entry name" value="GcvP2_C"/>
    <property type="match status" value="1"/>
</dbReference>
<dbReference type="Pfam" id="PF02347">
    <property type="entry name" value="GDC-P"/>
    <property type="match status" value="2"/>
</dbReference>
<dbReference type="SUPFAM" id="SSF53383">
    <property type="entry name" value="PLP-dependent transferases"/>
    <property type="match status" value="2"/>
</dbReference>
<reference key="1">
    <citation type="journal article" date="2002" name="Proc. Natl. Acad. Sci. U.S.A.">
        <title>The Brucella suis genome reveals fundamental similarities between animal and plant pathogens and symbionts.</title>
        <authorList>
            <person name="Paulsen I.T."/>
            <person name="Seshadri R."/>
            <person name="Nelson K.E."/>
            <person name="Eisen J.A."/>
            <person name="Heidelberg J.F."/>
            <person name="Read T.D."/>
            <person name="Dodson R.J."/>
            <person name="Umayam L.A."/>
            <person name="Brinkac L.M."/>
            <person name="Beanan M.J."/>
            <person name="Daugherty S.C."/>
            <person name="DeBoy R.T."/>
            <person name="Durkin A.S."/>
            <person name="Kolonay J.F."/>
            <person name="Madupu R."/>
            <person name="Nelson W.C."/>
            <person name="Ayodeji B."/>
            <person name="Kraul M."/>
            <person name="Shetty J."/>
            <person name="Malek J.A."/>
            <person name="Van Aken S.E."/>
            <person name="Riedmuller S."/>
            <person name="Tettelin H."/>
            <person name="Gill S.R."/>
            <person name="White O."/>
            <person name="Salzberg S.L."/>
            <person name="Hoover D.L."/>
            <person name="Lindler L.E."/>
            <person name="Halling S.M."/>
            <person name="Boyle S.M."/>
            <person name="Fraser C.M."/>
        </authorList>
    </citation>
    <scope>NUCLEOTIDE SEQUENCE [LARGE SCALE GENOMIC DNA]</scope>
    <source>
        <strain>1330</strain>
    </source>
</reference>
<reference key="2">
    <citation type="journal article" date="2011" name="J. Bacteriol.">
        <title>Revised genome sequence of Brucella suis 1330.</title>
        <authorList>
            <person name="Tae H."/>
            <person name="Shallom S."/>
            <person name="Settlage R."/>
            <person name="Preston D."/>
            <person name="Adams L.G."/>
            <person name="Garner H.R."/>
        </authorList>
    </citation>
    <scope>NUCLEOTIDE SEQUENCE [LARGE SCALE GENOMIC DNA]</scope>
    <source>
        <strain>1330</strain>
    </source>
</reference>
<sequence>MTEFLPFVARHIGPRHEDERAMLAALGLPSMETLITQAVPASIRLNRALNLPAALSEADALAELGTIMGRNVVKKSFIGAGYHGVHTPPVIQRNLFENPAWYTAYTPYQSEISQGRLELLFHFQTLVAELTGLPVACASLLDEATAVAEAIGVACRHHRDKRSRILLAGELHPQTVDVVNTRAEPLGWEIATGSDVDDNTAAIVVPWPDTRGVYGDFAKVIADAKAKGALVIAVADPLALTIMEAPARWGADMAVGSMQRYGVPMGFGGPHAAYLAVSEALTRIIPGRIVGQSVDAHGRAAYRLALQTREQHIRRDKATSNICTAQALLANMAAAFAIWHGPAGLQAIATRVAALAARFAAALKAAGVEIAGESLFDTVTAKVPGKAAAIAAEADKGGRLIRIIDADTVGVTFDETSTEEDLTALASLFGAKPVGGDTVLVPGKERGEGFLTQEVFHSHRSETEMMRFLRRLADKDLALDRAMIPLGSCTMKLNAAAEMMPVSWNTVANLHPFAPAEQVQGYAKMTSDLEAWLCEITGFAGVSLQPNAGSQGEYAGLMAIRHYHQAWGQGHRNICLIPSSAHGTNPASASMAGMSVVVVNCRPDGDIDIDDLKAKAEKHRDNLAAFMITYPSTYGVFEEGIKAFCEIVHDNGGQVYFDGANLNALVGLARPADIGADVCHMNLHKTFCIPHGGGGPGVGPIGVAKHLVPYLPGHVEAGSEHAVAAAQFGSASILVITWMYIRMMGGAGLKKATEAAILNANYIAHRLKGVYPILYTGAHDRVAHECIVDTRVLKDSAGITVEDVAKRLIDYGFHAPTMSWPVAGTLMIEPTESEPKLEIDRLCDAMIAIAGEAKKVADGVWPADDNPLANAPHTASDTLATEWKHPYTREEAVFPGGAFDPTAKYWPPVSRVDNVGGDRNLICSCPPVAAYG</sequence>
<keyword id="KW-0560">Oxidoreductase</keyword>
<keyword id="KW-0663">Pyridoxal phosphate</keyword>
<gene>
    <name evidence="1" type="primary">gcvP</name>
    <name type="ordered locus">BRA0725</name>
    <name type="ordered locus">BS1330_II0718</name>
</gene>
<protein>
    <recommendedName>
        <fullName evidence="1">Glycine dehydrogenase (decarboxylating)</fullName>
        <ecNumber evidence="1">1.4.4.2</ecNumber>
    </recommendedName>
    <alternativeName>
        <fullName evidence="1">Glycine cleavage system P-protein</fullName>
    </alternativeName>
    <alternativeName>
        <fullName evidence="1">Glycine decarboxylase</fullName>
    </alternativeName>
    <alternativeName>
        <fullName evidence="1">Glycine dehydrogenase (aminomethyl-transferring)</fullName>
    </alternativeName>
</protein>
<organism>
    <name type="scientific">Brucella suis biovar 1 (strain 1330)</name>
    <dbReference type="NCBI Taxonomy" id="204722"/>
    <lineage>
        <taxon>Bacteria</taxon>
        <taxon>Pseudomonadati</taxon>
        <taxon>Pseudomonadota</taxon>
        <taxon>Alphaproteobacteria</taxon>
        <taxon>Hyphomicrobiales</taxon>
        <taxon>Brucellaceae</taxon>
        <taxon>Brucella/Ochrobactrum group</taxon>
        <taxon>Brucella</taxon>
    </lineage>
</organism>
<feature type="chain" id="PRO_0000166910" description="Glycine dehydrogenase (decarboxylating)">
    <location>
        <begin position="1"/>
        <end position="932"/>
    </location>
</feature>
<feature type="modified residue" description="N6-(pyridoxal phosphate)lysine" evidence="1">
    <location>
        <position position="685"/>
    </location>
</feature>
<evidence type="ECO:0000255" key="1">
    <source>
        <dbReference type="HAMAP-Rule" id="MF_00711"/>
    </source>
</evidence>